<proteinExistence type="evidence at protein level"/>
<accession>Q58885</accession>
<dbReference type="EC" id="3.5.2.3" evidence="1"/>
<dbReference type="EMBL" id="L77117">
    <property type="protein sequence ID" value="AAB99503.1"/>
    <property type="molecule type" value="Genomic_DNA"/>
</dbReference>
<dbReference type="PIR" id="A64486">
    <property type="entry name" value="A64486"/>
</dbReference>
<dbReference type="RefSeq" id="WP_010871013.1">
    <property type="nucleotide sequence ID" value="NC_000909.1"/>
</dbReference>
<dbReference type="PDB" id="7UOF">
    <property type="method" value="X-ray"/>
    <property type="resolution" value="1.90 A"/>
    <property type="chains" value="A=1-423"/>
</dbReference>
<dbReference type="PDBsum" id="7UOF"/>
<dbReference type="SMR" id="Q58885"/>
<dbReference type="FunCoup" id="Q58885">
    <property type="interactions" value="121"/>
</dbReference>
<dbReference type="STRING" id="243232.MJ_1490"/>
<dbReference type="MEROPS" id="M38.972"/>
<dbReference type="PaxDb" id="243232-MJ_1490"/>
<dbReference type="DNASU" id="1452397"/>
<dbReference type="EnsemblBacteria" id="AAB99503">
    <property type="protein sequence ID" value="AAB99503"/>
    <property type="gene ID" value="MJ_1490"/>
</dbReference>
<dbReference type="GeneID" id="1452397"/>
<dbReference type="KEGG" id="mja:MJ_1490"/>
<dbReference type="eggNOG" id="arCOG00689">
    <property type="taxonomic scope" value="Archaea"/>
</dbReference>
<dbReference type="HOGENOM" id="CLU_015572_1_1_2"/>
<dbReference type="InParanoid" id="Q58885"/>
<dbReference type="OrthoDB" id="50279at2157"/>
<dbReference type="PhylomeDB" id="Q58885"/>
<dbReference type="UniPathway" id="UPA00070">
    <property type="reaction ID" value="UER00117"/>
</dbReference>
<dbReference type="Proteomes" id="UP000000805">
    <property type="component" value="Chromosome"/>
</dbReference>
<dbReference type="GO" id="GO:0005737">
    <property type="term" value="C:cytoplasm"/>
    <property type="evidence" value="ECO:0000318"/>
    <property type="project" value="GO_Central"/>
</dbReference>
<dbReference type="GO" id="GO:0004038">
    <property type="term" value="F:allantoinase activity"/>
    <property type="evidence" value="ECO:0000318"/>
    <property type="project" value="GO_Central"/>
</dbReference>
<dbReference type="GO" id="GO:0004151">
    <property type="term" value="F:dihydroorotase activity"/>
    <property type="evidence" value="ECO:0007669"/>
    <property type="project" value="UniProtKB-UniRule"/>
</dbReference>
<dbReference type="GO" id="GO:0008270">
    <property type="term" value="F:zinc ion binding"/>
    <property type="evidence" value="ECO:0007669"/>
    <property type="project" value="UniProtKB-UniRule"/>
</dbReference>
<dbReference type="GO" id="GO:0044205">
    <property type="term" value="P:'de novo' UMP biosynthetic process"/>
    <property type="evidence" value="ECO:0007669"/>
    <property type="project" value="UniProtKB-UniRule"/>
</dbReference>
<dbReference type="GO" id="GO:0006145">
    <property type="term" value="P:purine nucleobase catabolic process"/>
    <property type="evidence" value="ECO:0000318"/>
    <property type="project" value="GO_Central"/>
</dbReference>
<dbReference type="CDD" id="cd01318">
    <property type="entry name" value="DHOase_IIb"/>
    <property type="match status" value="1"/>
</dbReference>
<dbReference type="Gene3D" id="3.20.20.140">
    <property type="entry name" value="Metal-dependent hydrolases"/>
    <property type="match status" value="1"/>
</dbReference>
<dbReference type="Gene3D" id="2.30.40.10">
    <property type="entry name" value="Urease, subunit C, domain 1"/>
    <property type="match status" value="1"/>
</dbReference>
<dbReference type="HAMAP" id="MF_00220_A">
    <property type="entry name" value="PyrC_classI_A"/>
    <property type="match status" value="1"/>
</dbReference>
<dbReference type="InterPro" id="IPR006680">
    <property type="entry name" value="Amidohydro-rel"/>
</dbReference>
<dbReference type="InterPro" id="IPR004722">
    <property type="entry name" value="DHOase"/>
</dbReference>
<dbReference type="InterPro" id="IPR050138">
    <property type="entry name" value="DHOase/Allantoinase_Hydrolase"/>
</dbReference>
<dbReference type="InterPro" id="IPR002195">
    <property type="entry name" value="Dihydroorotase_CS"/>
</dbReference>
<dbReference type="InterPro" id="IPR011059">
    <property type="entry name" value="Metal-dep_hydrolase_composite"/>
</dbReference>
<dbReference type="InterPro" id="IPR032466">
    <property type="entry name" value="Metal_Hydrolase"/>
</dbReference>
<dbReference type="NCBIfam" id="TIGR00857">
    <property type="entry name" value="pyrC_multi"/>
    <property type="match status" value="1"/>
</dbReference>
<dbReference type="PANTHER" id="PTHR43668">
    <property type="entry name" value="ALLANTOINASE"/>
    <property type="match status" value="1"/>
</dbReference>
<dbReference type="PANTHER" id="PTHR43668:SF2">
    <property type="entry name" value="ALLANTOINASE"/>
    <property type="match status" value="1"/>
</dbReference>
<dbReference type="Pfam" id="PF01979">
    <property type="entry name" value="Amidohydro_1"/>
    <property type="match status" value="1"/>
</dbReference>
<dbReference type="SUPFAM" id="SSF51338">
    <property type="entry name" value="Composite domain of metallo-dependent hydrolases"/>
    <property type="match status" value="1"/>
</dbReference>
<dbReference type="SUPFAM" id="SSF51556">
    <property type="entry name" value="Metallo-dependent hydrolases"/>
    <property type="match status" value="1"/>
</dbReference>
<dbReference type="PROSITE" id="PS00482">
    <property type="entry name" value="DIHYDROOROTASE_1"/>
    <property type="match status" value="1"/>
</dbReference>
<dbReference type="PROSITE" id="PS00483">
    <property type="entry name" value="DIHYDROOROTASE_2"/>
    <property type="match status" value="1"/>
</dbReference>
<protein>
    <recommendedName>
        <fullName evidence="1">Dihydroorotase</fullName>
        <shortName evidence="1">DHOase</shortName>
        <ecNumber evidence="1">3.5.2.3</ecNumber>
    </recommendedName>
</protein>
<sequence>MLLKNCRIIKDNKIIEGDILIDENGRIKKIAKDIKVDDEIIDIKNSLVIPGVIDAHVHFRWGEEKKEDFLSGSLAGINGGVCFAIDMPNNKPPITTKELFYKKLEDCKKDSKINVFLNFGVTENNYLGTVEDAKAYKIFMVKSVGDLFIEDYSKLKDILNQNKLFCIHAEHKDVINENLKKYQLNSWIDHCKIRDEKSEVEAVKEVIKNLKIIDRQSNKKPHVHFCHISTKEALYLIKKVRQELKNIKITVEVTPHHIYLNKDMAEELKGFGKFNPPLREKDDNIALIKGIVNKDVDIIASDHAPHLLEDKLKNVKNCPSGIPGIETIVPLTLNLVNKGLISLFDAIRVLSKNPAKIFNINNKIEEGNLANLTIIDLKKEGKINAELFKSKAKFSPFDGWEVKGFPIYTVINGTLYEAYGCKC</sequence>
<feature type="chain" id="PRO_0000147270" description="Dihydroorotase">
    <location>
        <begin position="1"/>
        <end position="423"/>
    </location>
</feature>
<feature type="active site" evidence="1">
    <location>
        <position position="302"/>
    </location>
</feature>
<feature type="binding site" evidence="1">
    <location>
        <position position="56"/>
    </location>
    <ligand>
        <name>Zn(2+)</name>
        <dbReference type="ChEBI" id="CHEBI:29105"/>
        <label>1</label>
    </ligand>
</feature>
<feature type="binding site" evidence="1">
    <location>
        <begin position="58"/>
        <end position="60"/>
    </location>
    <ligand>
        <name>substrate</name>
    </ligand>
</feature>
<feature type="binding site" evidence="1">
    <location>
        <position position="58"/>
    </location>
    <ligand>
        <name>Zn(2+)</name>
        <dbReference type="ChEBI" id="CHEBI:29105"/>
        <label>1</label>
    </ligand>
</feature>
<feature type="binding site" evidence="1">
    <location>
        <position position="89"/>
    </location>
    <ligand>
        <name>substrate</name>
    </ligand>
</feature>
<feature type="binding site" evidence="1">
    <location>
        <position position="137"/>
    </location>
    <ligand>
        <name>Zn(2+)</name>
        <dbReference type="ChEBI" id="CHEBI:29105"/>
        <label>1</label>
    </ligand>
</feature>
<feature type="binding site" evidence="1">
    <location>
        <position position="137"/>
    </location>
    <ligand>
        <name>Zn(2+)</name>
        <dbReference type="ChEBI" id="CHEBI:29105"/>
        <label>2</label>
    </ligand>
</feature>
<feature type="binding site" evidence="1">
    <location>
        <position position="168"/>
    </location>
    <ligand>
        <name>Zn(2+)</name>
        <dbReference type="ChEBI" id="CHEBI:29105"/>
        <label>2</label>
    </ligand>
</feature>
<feature type="binding site" evidence="1">
    <location>
        <position position="227"/>
    </location>
    <ligand>
        <name>Zn(2+)</name>
        <dbReference type="ChEBI" id="CHEBI:29105"/>
        <label>2</label>
    </ligand>
</feature>
<feature type="binding site" evidence="1">
    <location>
        <position position="302"/>
    </location>
    <ligand>
        <name>Zn(2+)</name>
        <dbReference type="ChEBI" id="CHEBI:29105"/>
        <label>1</label>
    </ligand>
</feature>
<feature type="binding site" evidence="1">
    <location>
        <position position="306"/>
    </location>
    <ligand>
        <name>substrate</name>
    </ligand>
</feature>
<feature type="modified residue" description="N6-carboxylysine" evidence="1">
    <location>
        <position position="137"/>
    </location>
</feature>
<feature type="strand" evidence="2">
    <location>
        <begin position="2"/>
        <end position="10"/>
    </location>
</feature>
<feature type="strand" evidence="2">
    <location>
        <begin position="13"/>
        <end position="21"/>
    </location>
</feature>
<feature type="strand" evidence="2">
    <location>
        <begin position="25"/>
        <end position="31"/>
    </location>
</feature>
<feature type="strand" evidence="2">
    <location>
        <begin position="40"/>
        <end position="42"/>
    </location>
</feature>
<feature type="strand" evidence="2">
    <location>
        <begin position="47"/>
        <end position="50"/>
    </location>
</feature>
<feature type="strand" evidence="2">
    <location>
        <begin position="52"/>
        <end position="57"/>
    </location>
</feature>
<feature type="turn" evidence="2">
    <location>
        <begin position="64"/>
        <end position="66"/>
    </location>
</feature>
<feature type="helix" evidence="2">
    <location>
        <begin position="69"/>
        <end position="78"/>
    </location>
</feature>
<feature type="strand" evidence="2">
    <location>
        <begin position="81"/>
        <end position="86"/>
    </location>
</feature>
<feature type="helix" evidence="2">
    <location>
        <begin position="97"/>
        <end position="110"/>
    </location>
</feature>
<feature type="strand" evidence="2">
    <location>
        <begin position="112"/>
        <end position="117"/>
    </location>
</feature>
<feature type="turn" evidence="2">
    <location>
        <begin position="123"/>
        <end position="127"/>
    </location>
</feature>
<feature type="strand" evidence="2">
    <location>
        <begin position="136"/>
        <end position="141"/>
    </location>
</feature>
<feature type="helix" evidence="2">
    <location>
        <begin position="152"/>
        <end position="154"/>
    </location>
</feature>
<feature type="helix" evidence="2">
    <location>
        <begin position="155"/>
        <end position="159"/>
    </location>
</feature>
<feature type="strand" evidence="2">
    <location>
        <begin position="160"/>
        <end position="168"/>
    </location>
</feature>
<feature type="helix" evidence="2">
    <location>
        <begin position="172"/>
        <end position="181"/>
    </location>
</feature>
<feature type="helix" evidence="2">
    <location>
        <begin position="187"/>
        <end position="193"/>
    </location>
</feature>
<feature type="helix" evidence="2">
    <location>
        <begin position="196"/>
        <end position="216"/>
    </location>
</feature>
<feature type="strand" evidence="2">
    <location>
        <begin position="222"/>
        <end position="225"/>
    </location>
</feature>
<feature type="helix" evidence="2">
    <location>
        <begin position="231"/>
        <end position="241"/>
    </location>
</feature>
<feature type="strand" evidence="2">
    <location>
        <begin position="248"/>
        <end position="253"/>
    </location>
</feature>
<feature type="helix" evidence="2">
    <location>
        <begin position="255"/>
        <end position="259"/>
    </location>
</feature>
<feature type="helix" evidence="2">
    <location>
        <begin position="262"/>
        <end position="264"/>
    </location>
</feature>
<feature type="helix" evidence="2">
    <location>
        <begin position="265"/>
        <end position="268"/>
    </location>
</feature>
<feature type="helix" evidence="2">
    <location>
        <begin position="269"/>
        <end position="272"/>
    </location>
</feature>
<feature type="helix" evidence="2">
    <location>
        <begin position="281"/>
        <end position="292"/>
    </location>
</feature>
<feature type="helix" evidence="2">
    <location>
        <begin position="308"/>
        <end position="311"/>
    </location>
</feature>
<feature type="turn" evidence="2">
    <location>
        <begin position="315"/>
        <end position="317"/>
    </location>
</feature>
<feature type="turn" evidence="2">
    <location>
        <begin position="325"/>
        <end position="327"/>
    </location>
</feature>
<feature type="helix" evidence="2">
    <location>
        <begin position="328"/>
        <end position="337"/>
    </location>
</feature>
<feature type="helix" evidence="2">
    <location>
        <begin position="343"/>
        <end position="350"/>
    </location>
</feature>
<feature type="helix" evidence="2">
    <location>
        <begin position="352"/>
        <end position="358"/>
    </location>
</feature>
<feature type="strand" evidence="2">
    <location>
        <begin position="372"/>
        <end position="382"/>
    </location>
</feature>
<feature type="helix" evidence="2">
    <location>
        <begin position="385"/>
        <end position="387"/>
    </location>
</feature>
<feature type="turn" evidence="2">
    <location>
        <begin position="396"/>
        <end position="399"/>
    </location>
</feature>
<feature type="strand" evidence="2">
    <location>
        <begin position="401"/>
        <end position="411"/>
    </location>
</feature>
<feature type="strand" evidence="2">
    <location>
        <begin position="414"/>
        <end position="417"/>
    </location>
</feature>
<feature type="turn" evidence="2">
    <location>
        <begin position="419"/>
        <end position="422"/>
    </location>
</feature>
<evidence type="ECO:0000255" key="1">
    <source>
        <dbReference type="HAMAP-Rule" id="MF_00220"/>
    </source>
</evidence>
<evidence type="ECO:0007829" key="2">
    <source>
        <dbReference type="PDB" id="7UOF"/>
    </source>
</evidence>
<reference key="1">
    <citation type="journal article" date="1996" name="Science">
        <title>Complete genome sequence of the methanogenic archaeon, Methanococcus jannaschii.</title>
        <authorList>
            <person name="Bult C.J."/>
            <person name="White O."/>
            <person name="Olsen G.J."/>
            <person name="Zhou L."/>
            <person name="Fleischmann R.D."/>
            <person name="Sutton G.G."/>
            <person name="Blake J.A."/>
            <person name="FitzGerald L.M."/>
            <person name="Clayton R.A."/>
            <person name="Gocayne J.D."/>
            <person name="Kerlavage A.R."/>
            <person name="Dougherty B.A."/>
            <person name="Tomb J.-F."/>
            <person name="Adams M.D."/>
            <person name="Reich C.I."/>
            <person name="Overbeek R."/>
            <person name="Kirkness E.F."/>
            <person name="Weinstock K.G."/>
            <person name="Merrick J.M."/>
            <person name="Glodek A."/>
            <person name="Scott J.L."/>
            <person name="Geoghagen N.S.M."/>
            <person name="Weidman J.F."/>
            <person name="Fuhrmann J.L."/>
            <person name="Nguyen D."/>
            <person name="Utterback T.R."/>
            <person name="Kelley J.M."/>
            <person name="Peterson J.D."/>
            <person name="Sadow P.W."/>
            <person name="Hanna M.C."/>
            <person name="Cotton M.D."/>
            <person name="Roberts K.M."/>
            <person name="Hurst M.A."/>
            <person name="Kaine B.P."/>
            <person name="Borodovsky M."/>
            <person name="Klenk H.-P."/>
            <person name="Fraser C.M."/>
            <person name="Smith H.O."/>
            <person name="Woese C.R."/>
            <person name="Venter J.C."/>
        </authorList>
    </citation>
    <scope>NUCLEOTIDE SEQUENCE [LARGE SCALE GENOMIC DNA]</scope>
    <source>
        <strain>ATCC 43067 / DSM 2661 / JAL-1 / JCM 10045 / NBRC 100440</strain>
    </source>
</reference>
<comment type="function">
    <text evidence="1">Catalyzes the reversible cyclization of carbamoyl aspartate to dihydroorotate.</text>
</comment>
<comment type="catalytic activity">
    <reaction evidence="1">
        <text>(S)-dihydroorotate + H2O = N-carbamoyl-L-aspartate + H(+)</text>
        <dbReference type="Rhea" id="RHEA:24296"/>
        <dbReference type="ChEBI" id="CHEBI:15377"/>
        <dbReference type="ChEBI" id="CHEBI:15378"/>
        <dbReference type="ChEBI" id="CHEBI:30864"/>
        <dbReference type="ChEBI" id="CHEBI:32814"/>
        <dbReference type="EC" id="3.5.2.3"/>
    </reaction>
</comment>
<comment type="cofactor">
    <cofactor evidence="1">
        <name>Zn(2+)</name>
        <dbReference type="ChEBI" id="CHEBI:29105"/>
    </cofactor>
    <text evidence="1">Binds 2 Zn(2+) ions per subunit.</text>
</comment>
<comment type="pathway">
    <text evidence="1">Pyrimidine metabolism; UMP biosynthesis via de novo pathway; (S)-dihydroorotate from bicarbonate: step 3/3.</text>
</comment>
<comment type="similarity">
    <text evidence="1">Belongs to the metallo-dependent hydrolases superfamily. DHOase family. Class I DHOase subfamily.</text>
</comment>
<name>PYRC_METJA</name>
<keyword id="KW-0002">3D-structure</keyword>
<keyword id="KW-0378">Hydrolase</keyword>
<keyword id="KW-0479">Metal-binding</keyword>
<keyword id="KW-0665">Pyrimidine biosynthesis</keyword>
<keyword id="KW-1185">Reference proteome</keyword>
<keyword id="KW-0862">Zinc</keyword>
<gene>
    <name evidence="1" type="primary">pyrC</name>
    <name type="ordered locus">MJ1490</name>
</gene>
<organism>
    <name type="scientific">Methanocaldococcus jannaschii (strain ATCC 43067 / DSM 2661 / JAL-1 / JCM 10045 / NBRC 100440)</name>
    <name type="common">Methanococcus jannaschii</name>
    <dbReference type="NCBI Taxonomy" id="243232"/>
    <lineage>
        <taxon>Archaea</taxon>
        <taxon>Methanobacteriati</taxon>
        <taxon>Methanobacteriota</taxon>
        <taxon>Methanomada group</taxon>
        <taxon>Methanococci</taxon>
        <taxon>Methanococcales</taxon>
        <taxon>Methanocaldococcaceae</taxon>
        <taxon>Methanocaldococcus</taxon>
    </lineage>
</organism>